<keyword id="KW-1015">Disulfide bond</keyword>
<keyword id="KW-0646">Protease inhibitor</keyword>
<keyword id="KW-0677">Repeat</keyword>
<keyword id="KW-0964">Secreted</keyword>
<keyword id="KW-0722">Serine protease inhibitor</keyword>
<keyword id="KW-0732">Signal</keyword>
<organism>
    <name type="scientific">Chlorocebus aethiops</name>
    <name type="common">Green monkey</name>
    <name type="synonym">Cercopithecus aethiops</name>
    <dbReference type="NCBI Taxonomy" id="9534"/>
    <lineage>
        <taxon>Eukaryota</taxon>
        <taxon>Metazoa</taxon>
        <taxon>Chordata</taxon>
        <taxon>Craniata</taxon>
        <taxon>Vertebrata</taxon>
        <taxon>Euteleostomi</taxon>
        <taxon>Mammalia</taxon>
        <taxon>Eutheria</taxon>
        <taxon>Euarchontoglires</taxon>
        <taxon>Primates</taxon>
        <taxon>Haplorrhini</taxon>
        <taxon>Catarrhini</taxon>
        <taxon>Cercopithecidae</taxon>
        <taxon>Cercopithecinae</taxon>
        <taxon>Chlorocebus</taxon>
    </lineage>
</organism>
<gene>
    <name type="primary">WFDC5</name>
</gene>
<reference key="1">
    <citation type="journal article" date="2007" name="Genome Res.">
        <title>Comparative sequence analyses reveal rapid and divergent evolutionary changes of the WFDC locus in the primate lineage.</title>
        <authorList>
            <consortium name="NISC comparative sequencing program"/>
            <person name="Hurle B."/>
            <person name="Swanson W."/>
            <person name="Green E.D."/>
        </authorList>
    </citation>
    <scope>NUCLEOTIDE SEQUENCE [GENOMIC DNA]</scope>
</reference>
<name>WFDC5_CHLAE</name>
<protein>
    <recommendedName>
        <fullName>WAP four-disulfide core domain protein 5</fullName>
    </recommendedName>
</protein>
<proteinExistence type="inferred from homology"/>
<accession>A4K2Y3</accession>
<dbReference type="EMBL" id="DP000048">
    <property type="protein sequence ID" value="ABO53018.1"/>
    <property type="molecule type" value="Genomic_DNA"/>
</dbReference>
<dbReference type="SMR" id="A4K2Y3"/>
<dbReference type="GO" id="GO:0005615">
    <property type="term" value="C:extracellular space"/>
    <property type="evidence" value="ECO:0007669"/>
    <property type="project" value="TreeGrafter"/>
</dbReference>
<dbReference type="GO" id="GO:0004867">
    <property type="term" value="F:serine-type endopeptidase inhibitor activity"/>
    <property type="evidence" value="ECO:0007669"/>
    <property type="project" value="UniProtKB-KW"/>
</dbReference>
<dbReference type="GO" id="GO:0019731">
    <property type="term" value="P:antibacterial humoral response"/>
    <property type="evidence" value="ECO:0007669"/>
    <property type="project" value="TreeGrafter"/>
</dbReference>
<dbReference type="GO" id="GO:0045087">
    <property type="term" value="P:innate immune response"/>
    <property type="evidence" value="ECO:0007669"/>
    <property type="project" value="TreeGrafter"/>
</dbReference>
<dbReference type="FunFam" id="4.10.75.10:FF:000001">
    <property type="entry name" value="Anosmin 1"/>
    <property type="match status" value="1"/>
</dbReference>
<dbReference type="Gene3D" id="4.10.75.10">
    <property type="entry name" value="Elafin-like"/>
    <property type="match status" value="2"/>
</dbReference>
<dbReference type="InterPro" id="IPR036645">
    <property type="entry name" value="Elafin-like_sf"/>
</dbReference>
<dbReference type="InterPro" id="IPR008197">
    <property type="entry name" value="WAP_dom"/>
</dbReference>
<dbReference type="InterPro" id="IPR050514">
    <property type="entry name" value="WAP_four-disulfide_core"/>
</dbReference>
<dbReference type="PANTHER" id="PTHR19441:SF39">
    <property type="entry name" value="WAP FOUR-DISULFIDE CORE DOMAIN PROTEIN 5"/>
    <property type="match status" value="1"/>
</dbReference>
<dbReference type="PANTHER" id="PTHR19441">
    <property type="entry name" value="WHEY ACDIC PROTEIN WAP"/>
    <property type="match status" value="1"/>
</dbReference>
<dbReference type="Pfam" id="PF00095">
    <property type="entry name" value="WAP"/>
    <property type="match status" value="2"/>
</dbReference>
<dbReference type="PRINTS" id="PR00003">
    <property type="entry name" value="4DISULPHCORE"/>
</dbReference>
<dbReference type="SMART" id="SM00217">
    <property type="entry name" value="WAP"/>
    <property type="match status" value="2"/>
</dbReference>
<dbReference type="SUPFAM" id="SSF57256">
    <property type="entry name" value="Elafin-like"/>
    <property type="match status" value="2"/>
</dbReference>
<dbReference type="PROSITE" id="PS51390">
    <property type="entry name" value="WAP"/>
    <property type="match status" value="2"/>
</dbReference>
<sequence length="123" mass="13364">MRIQSLLLLGALLAVGSQLPAVFGRKKGEKWGGCPADDGPCLLSVPDQCVEDSQCPLTRKCCYRACFRQCVPRVSVKPGSCPQDQLRCLSPVNHQCHKDSDCSGKKRCCHSACGRDCRDPARG</sequence>
<feature type="signal peptide" evidence="2">
    <location>
        <begin position="1"/>
        <end position="24"/>
    </location>
</feature>
<feature type="chain" id="PRO_0000289635" description="WAP four-disulfide core domain protein 5">
    <location>
        <begin position="25"/>
        <end position="123"/>
    </location>
</feature>
<feature type="domain" description="WAP 1" evidence="3">
    <location>
        <begin position="27"/>
        <end position="73"/>
    </location>
</feature>
<feature type="domain" description="WAP 2" evidence="3">
    <location>
        <begin position="74"/>
        <end position="121"/>
    </location>
</feature>
<feature type="disulfide bond" evidence="3">
    <location>
        <begin position="34"/>
        <end position="62"/>
    </location>
</feature>
<feature type="disulfide bond" evidence="3">
    <location>
        <begin position="41"/>
        <end position="66"/>
    </location>
</feature>
<feature type="disulfide bond" evidence="3">
    <location>
        <begin position="49"/>
        <end position="61"/>
    </location>
</feature>
<feature type="disulfide bond" evidence="3">
    <location>
        <begin position="55"/>
        <end position="70"/>
    </location>
</feature>
<feature type="disulfide bond" evidence="3">
    <location>
        <begin position="81"/>
        <end position="109"/>
    </location>
</feature>
<feature type="disulfide bond" evidence="3">
    <location>
        <begin position="88"/>
        <end position="113"/>
    </location>
</feature>
<feature type="disulfide bond" evidence="3">
    <location>
        <begin position="96"/>
        <end position="108"/>
    </location>
</feature>
<feature type="disulfide bond" evidence="3">
    <location>
        <begin position="102"/>
        <end position="117"/>
    </location>
</feature>
<evidence type="ECO:0000250" key="1"/>
<evidence type="ECO:0000255" key="2"/>
<evidence type="ECO:0000255" key="3">
    <source>
        <dbReference type="PROSITE-ProRule" id="PRU00722"/>
    </source>
</evidence>
<evidence type="ECO:0000305" key="4"/>
<comment type="function">
    <text evidence="1">Putative acid-stable proteinase inhibitor.</text>
</comment>
<comment type="subcellular location">
    <subcellularLocation>
        <location evidence="4">Secreted</location>
    </subcellularLocation>
</comment>